<protein>
    <recommendedName>
        <fullName evidence="1">L-rhamnose mutarotase</fullName>
        <ecNumber evidence="1">5.1.3.32</ecNumber>
    </recommendedName>
    <alternativeName>
        <fullName evidence="1">Rhamnose 1-epimerase</fullName>
    </alternativeName>
    <alternativeName>
        <fullName evidence="1">Type-3 mutarotase</fullName>
    </alternativeName>
</protein>
<reference key="1">
    <citation type="submission" date="2008-02" db="EMBL/GenBank/DDBJ databases">
        <title>Complete sequence of Yersinia pseudotuberculosis YPIII.</title>
        <authorList>
            <consortium name="US DOE Joint Genome Institute"/>
            <person name="Copeland A."/>
            <person name="Lucas S."/>
            <person name="Lapidus A."/>
            <person name="Glavina del Rio T."/>
            <person name="Dalin E."/>
            <person name="Tice H."/>
            <person name="Bruce D."/>
            <person name="Goodwin L."/>
            <person name="Pitluck S."/>
            <person name="Munk A.C."/>
            <person name="Brettin T."/>
            <person name="Detter J.C."/>
            <person name="Han C."/>
            <person name="Tapia R."/>
            <person name="Schmutz J."/>
            <person name="Larimer F."/>
            <person name="Land M."/>
            <person name="Hauser L."/>
            <person name="Challacombe J.F."/>
            <person name="Green L."/>
            <person name="Lindler L.E."/>
            <person name="Nikolich M.P."/>
            <person name="Richardson P."/>
        </authorList>
    </citation>
    <scope>NUCLEOTIDE SEQUENCE [LARGE SCALE GENOMIC DNA]</scope>
    <source>
        <strain>YPIII</strain>
    </source>
</reference>
<proteinExistence type="inferred from homology"/>
<keyword id="KW-0119">Carbohydrate metabolism</keyword>
<keyword id="KW-0963">Cytoplasm</keyword>
<keyword id="KW-0413">Isomerase</keyword>
<keyword id="KW-0684">Rhamnose metabolism</keyword>
<evidence type="ECO:0000255" key="1">
    <source>
        <dbReference type="HAMAP-Rule" id="MF_01663"/>
    </source>
</evidence>
<organism>
    <name type="scientific">Yersinia pseudotuberculosis serotype O:3 (strain YPIII)</name>
    <dbReference type="NCBI Taxonomy" id="502800"/>
    <lineage>
        <taxon>Bacteria</taxon>
        <taxon>Pseudomonadati</taxon>
        <taxon>Pseudomonadota</taxon>
        <taxon>Gammaproteobacteria</taxon>
        <taxon>Enterobacterales</taxon>
        <taxon>Yersiniaceae</taxon>
        <taxon>Yersinia</taxon>
    </lineage>
</organism>
<accession>B1JND2</accession>
<name>RHAM_YERPY</name>
<comment type="function">
    <text evidence="1">Involved in the anomeric conversion of L-rhamnose.</text>
</comment>
<comment type="catalytic activity">
    <reaction evidence="1">
        <text>alpha-L-rhamnose = beta-L-rhamnose</text>
        <dbReference type="Rhea" id="RHEA:25584"/>
        <dbReference type="ChEBI" id="CHEBI:27586"/>
        <dbReference type="ChEBI" id="CHEBI:27907"/>
        <dbReference type="EC" id="5.1.3.32"/>
    </reaction>
</comment>
<comment type="pathway">
    <text evidence="1">Carbohydrate metabolism; L-rhamnose metabolism.</text>
</comment>
<comment type="subunit">
    <text evidence="1">Homodimer.</text>
</comment>
<comment type="subcellular location">
    <subcellularLocation>
        <location evidence="1">Cytoplasm</location>
    </subcellularLocation>
</comment>
<comment type="similarity">
    <text evidence="1">Belongs to the rhamnose mutarotase family.</text>
</comment>
<dbReference type="EC" id="5.1.3.32" evidence="1"/>
<dbReference type="EMBL" id="CP000950">
    <property type="protein sequence ID" value="ACA70114.1"/>
    <property type="molecule type" value="Genomic_DNA"/>
</dbReference>
<dbReference type="RefSeq" id="WP_002209101.1">
    <property type="nucleotide sequence ID" value="NZ_CP009792.1"/>
</dbReference>
<dbReference type="SMR" id="B1JND2"/>
<dbReference type="GeneID" id="57974279"/>
<dbReference type="KEGG" id="ypy:YPK_3849"/>
<dbReference type="PATRIC" id="fig|502800.11.peg.196"/>
<dbReference type="UniPathway" id="UPA00125"/>
<dbReference type="GO" id="GO:0005737">
    <property type="term" value="C:cytoplasm"/>
    <property type="evidence" value="ECO:0007669"/>
    <property type="project" value="UniProtKB-SubCell"/>
</dbReference>
<dbReference type="GO" id="GO:0062192">
    <property type="term" value="F:L-rhamnose mutarotase activity"/>
    <property type="evidence" value="ECO:0007669"/>
    <property type="project" value="UniProtKB-EC"/>
</dbReference>
<dbReference type="GO" id="GO:0019301">
    <property type="term" value="P:rhamnose catabolic process"/>
    <property type="evidence" value="ECO:0007669"/>
    <property type="project" value="TreeGrafter"/>
</dbReference>
<dbReference type="Gene3D" id="3.30.70.100">
    <property type="match status" value="1"/>
</dbReference>
<dbReference type="HAMAP" id="MF_01663">
    <property type="entry name" value="L_rham_rotase"/>
    <property type="match status" value="1"/>
</dbReference>
<dbReference type="InterPro" id="IPR011008">
    <property type="entry name" value="Dimeric_a/b-barrel"/>
</dbReference>
<dbReference type="InterPro" id="IPR013448">
    <property type="entry name" value="L-rhamnose_mutarotase"/>
</dbReference>
<dbReference type="InterPro" id="IPR008000">
    <property type="entry name" value="Rham/fucose_mutarotase"/>
</dbReference>
<dbReference type="NCBIfam" id="TIGR02625">
    <property type="entry name" value="YiiL_rotase"/>
    <property type="match status" value="1"/>
</dbReference>
<dbReference type="PANTHER" id="PTHR34389">
    <property type="entry name" value="L-RHAMNOSE MUTAROTASE"/>
    <property type="match status" value="1"/>
</dbReference>
<dbReference type="PANTHER" id="PTHR34389:SF2">
    <property type="entry name" value="L-RHAMNOSE MUTAROTASE"/>
    <property type="match status" value="1"/>
</dbReference>
<dbReference type="Pfam" id="PF05336">
    <property type="entry name" value="rhaM"/>
    <property type="match status" value="1"/>
</dbReference>
<dbReference type="SUPFAM" id="SSF54909">
    <property type="entry name" value="Dimeric alpha+beta barrel"/>
    <property type="match status" value="1"/>
</dbReference>
<gene>
    <name evidence="1" type="primary">rhaM</name>
    <name type="ordered locus">YPK_3849</name>
</gene>
<feature type="chain" id="PRO_0000344619" description="L-rhamnose mutarotase">
    <location>
        <begin position="1"/>
        <end position="104"/>
    </location>
</feature>
<feature type="active site" description="Proton donor" evidence="1">
    <location>
        <position position="22"/>
    </location>
</feature>
<feature type="binding site" evidence="1">
    <location>
        <position position="18"/>
    </location>
    <ligand>
        <name>substrate</name>
    </ligand>
</feature>
<feature type="binding site" evidence="1">
    <location>
        <position position="41"/>
    </location>
    <ligand>
        <name>substrate</name>
    </ligand>
</feature>
<feature type="binding site" evidence="1">
    <location>
        <begin position="76"/>
        <end position="77"/>
    </location>
    <ligand>
        <name>substrate</name>
    </ligand>
</feature>
<sequence length="104" mass="12198">MIRKAFVMAVNPDAHAEYQRRHTPIWPELESVLKAHGAHHYSIFLDETRNLLFGVVEIESEERWNAVAQTAECQRWWQHMADVMPSHPDNSPVSQALREVFYLE</sequence>